<dbReference type="EMBL" id="CP001050">
    <property type="protein sequence ID" value="ACF29145.1"/>
    <property type="molecule type" value="Genomic_DNA"/>
</dbReference>
<dbReference type="RefSeq" id="WP_003687686.1">
    <property type="nucleotide sequence ID" value="NC_011035.1"/>
</dbReference>
<dbReference type="SMR" id="B4RJZ4"/>
<dbReference type="KEGG" id="ngk:NGK_0454"/>
<dbReference type="HOGENOM" id="CLU_105066_1_3_4"/>
<dbReference type="Proteomes" id="UP000002564">
    <property type="component" value="Chromosome"/>
</dbReference>
<dbReference type="GO" id="GO:0005829">
    <property type="term" value="C:cytosol"/>
    <property type="evidence" value="ECO:0007669"/>
    <property type="project" value="TreeGrafter"/>
</dbReference>
<dbReference type="GO" id="GO:0003677">
    <property type="term" value="F:DNA binding"/>
    <property type="evidence" value="ECO:0007669"/>
    <property type="project" value="UniProtKB-UniRule"/>
</dbReference>
<dbReference type="GO" id="GO:0030527">
    <property type="term" value="F:structural constituent of chromatin"/>
    <property type="evidence" value="ECO:0007669"/>
    <property type="project" value="InterPro"/>
</dbReference>
<dbReference type="GO" id="GO:0006310">
    <property type="term" value="P:DNA recombination"/>
    <property type="evidence" value="ECO:0007669"/>
    <property type="project" value="UniProtKB-UniRule"/>
</dbReference>
<dbReference type="GO" id="GO:0009893">
    <property type="term" value="P:positive regulation of metabolic process"/>
    <property type="evidence" value="ECO:0007669"/>
    <property type="project" value="UniProtKB-ARBA"/>
</dbReference>
<dbReference type="GO" id="GO:0006355">
    <property type="term" value="P:regulation of DNA-templated transcription"/>
    <property type="evidence" value="ECO:0007669"/>
    <property type="project" value="UniProtKB-UniRule"/>
</dbReference>
<dbReference type="GO" id="GO:0006417">
    <property type="term" value="P:regulation of translation"/>
    <property type="evidence" value="ECO:0007669"/>
    <property type="project" value="UniProtKB-UniRule"/>
</dbReference>
<dbReference type="CDD" id="cd13835">
    <property type="entry name" value="IHF_A"/>
    <property type="match status" value="1"/>
</dbReference>
<dbReference type="FunFam" id="4.10.520.10:FF:000002">
    <property type="entry name" value="Integration host factor subunit alpha"/>
    <property type="match status" value="1"/>
</dbReference>
<dbReference type="Gene3D" id="4.10.520.10">
    <property type="entry name" value="IHF-like DNA-binding proteins"/>
    <property type="match status" value="1"/>
</dbReference>
<dbReference type="HAMAP" id="MF_00380">
    <property type="entry name" value="IHF_alpha"/>
    <property type="match status" value="1"/>
</dbReference>
<dbReference type="InterPro" id="IPR000119">
    <property type="entry name" value="Hist_DNA-bd"/>
</dbReference>
<dbReference type="InterPro" id="IPR020816">
    <property type="entry name" value="Histone-like_DNA-bd_CS"/>
</dbReference>
<dbReference type="InterPro" id="IPR010992">
    <property type="entry name" value="IHF-like_DNA-bd_dom_sf"/>
</dbReference>
<dbReference type="InterPro" id="IPR005684">
    <property type="entry name" value="IHF_alpha"/>
</dbReference>
<dbReference type="NCBIfam" id="TIGR00987">
    <property type="entry name" value="himA"/>
    <property type="match status" value="1"/>
</dbReference>
<dbReference type="NCBIfam" id="NF001401">
    <property type="entry name" value="PRK00285.1"/>
    <property type="match status" value="1"/>
</dbReference>
<dbReference type="PANTHER" id="PTHR33175">
    <property type="entry name" value="DNA-BINDING PROTEIN HU"/>
    <property type="match status" value="1"/>
</dbReference>
<dbReference type="PANTHER" id="PTHR33175:SF2">
    <property type="entry name" value="INTEGRATION HOST FACTOR SUBUNIT ALPHA"/>
    <property type="match status" value="1"/>
</dbReference>
<dbReference type="Pfam" id="PF00216">
    <property type="entry name" value="Bac_DNA_binding"/>
    <property type="match status" value="1"/>
</dbReference>
<dbReference type="PRINTS" id="PR01727">
    <property type="entry name" value="DNABINDINGHU"/>
</dbReference>
<dbReference type="SMART" id="SM00411">
    <property type="entry name" value="BHL"/>
    <property type="match status" value="1"/>
</dbReference>
<dbReference type="SUPFAM" id="SSF47729">
    <property type="entry name" value="IHF-like DNA-binding proteins"/>
    <property type="match status" value="1"/>
</dbReference>
<dbReference type="PROSITE" id="PS00045">
    <property type="entry name" value="HISTONE_LIKE"/>
    <property type="match status" value="1"/>
</dbReference>
<evidence type="ECO:0000255" key="1">
    <source>
        <dbReference type="HAMAP-Rule" id="MF_00380"/>
    </source>
</evidence>
<evidence type="ECO:0000256" key="2">
    <source>
        <dbReference type="SAM" id="MobiDB-lite"/>
    </source>
</evidence>
<sequence length="100" mass="11392">MTLTKAELADILVDKVSNVTKNDAKEIVELFFEEIRSTLASGEEIKISGFGNFQLRDKPQRPGRNPKTGEEVPITARRVVTFHASQKLKGMVEHYYDKQR</sequence>
<comment type="function">
    <text evidence="1">This protein is one of the two subunits of integration host factor, a specific DNA-binding protein that functions in genetic recombination as well as in transcriptional and translational control.</text>
</comment>
<comment type="subunit">
    <text evidence="1">Heterodimer of an alpha and a beta chain.</text>
</comment>
<comment type="similarity">
    <text evidence="1">Belongs to the bacterial histone-like protein family.</text>
</comment>
<feature type="chain" id="PRO_1000122150" description="Integration host factor subunit alpha">
    <location>
        <begin position="1"/>
        <end position="100"/>
    </location>
</feature>
<feature type="region of interest" description="Disordered" evidence="2">
    <location>
        <begin position="53"/>
        <end position="72"/>
    </location>
</feature>
<organism>
    <name type="scientific">Neisseria gonorrhoeae (strain NCCP11945)</name>
    <dbReference type="NCBI Taxonomy" id="521006"/>
    <lineage>
        <taxon>Bacteria</taxon>
        <taxon>Pseudomonadati</taxon>
        <taxon>Pseudomonadota</taxon>
        <taxon>Betaproteobacteria</taxon>
        <taxon>Neisseriales</taxon>
        <taxon>Neisseriaceae</taxon>
        <taxon>Neisseria</taxon>
    </lineage>
</organism>
<accession>B4RJZ4</accession>
<reference key="1">
    <citation type="journal article" date="2008" name="J. Bacteriol.">
        <title>Complete genome sequence of Neisseria gonorrhoeae NCCP11945.</title>
        <authorList>
            <person name="Chung G.T."/>
            <person name="Yoo J.S."/>
            <person name="Oh H.B."/>
            <person name="Lee Y.S."/>
            <person name="Cha S.H."/>
            <person name="Kim S.J."/>
            <person name="Yoo C.K."/>
        </authorList>
    </citation>
    <scope>NUCLEOTIDE SEQUENCE [LARGE SCALE GENOMIC DNA]</scope>
    <source>
        <strain>NCCP11945</strain>
    </source>
</reference>
<keyword id="KW-0233">DNA recombination</keyword>
<keyword id="KW-0238">DNA-binding</keyword>
<keyword id="KW-0804">Transcription</keyword>
<keyword id="KW-0805">Transcription regulation</keyword>
<keyword id="KW-0810">Translation regulation</keyword>
<protein>
    <recommendedName>
        <fullName evidence="1">Integration host factor subunit alpha</fullName>
        <shortName evidence="1">IHF-alpha</shortName>
    </recommendedName>
</protein>
<name>IHFA_NEIG2</name>
<gene>
    <name evidence="1" type="primary">ihfA</name>
    <name evidence="1" type="synonym">himA</name>
    <name type="ordered locus">NGK_0454</name>
</gene>
<proteinExistence type="inferred from homology"/>